<dbReference type="EMBL" id="CP000393">
    <property type="protein sequence ID" value="ABG52146.1"/>
    <property type="molecule type" value="Genomic_DNA"/>
</dbReference>
<dbReference type="RefSeq" id="WP_011612502.1">
    <property type="nucleotide sequence ID" value="NC_008312.1"/>
</dbReference>
<dbReference type="SMR" id="Q110C8"/>
<dbReference type="STRING" id="203124.Tery_2991"/>
<dbReference type="KEGG" id="ter:Tery_2991"/>
<dbReference type="eggNOG" id="COG0257">
    <property type="taxonomic scope" value="Bacteria"/>
</dbReference>
<dbReference type="HOGENOM" id="CLU_135723_6_2_3"/>
<dbReference type="GO" id="GO:0005737">
    <property type="term" value="C:cytoplasm"/>
    <property type="evidence" value="ECO:0007669"/>
    <property type="project" value="UniProtKB-ARBA"/>
</dbReference>
<dbReference type="GO" id="GO:1990904">
    <property type="term" value="C:ribonucleoprotein complex"/>
    <property type="evidence" value="ECO:0007669"/>
    <property type="project" value="UniProtKB-KW"/>
</dbReference>
<dbReference type="GO" id="GO:0005840">
    <property type="term" value="C:ribosome"/>
    <property type="evidence" value="ECO:0007669"/>
    <property type="project" value="UniProtKB-KW"/>
</dbReference>
<dbReference type="GO" id="GO:0003735">
    <property type="term" value="F:structural constituent of ribosome"/>
    <property type="evidence" value="ECO:0007669"/>
    <property type="project" value="InterPro"/>
</dbReference>
<dbReference type="GO" id="GO:0006412">
    <property type="term" value="P:translation"/>
    <property type="evidence" value="ECO:0007669"/>
    <property type="project" value="UniProtKB-UniRule"/>
</dbReference>
<dbReference type="HAMAP" id="MF_00251">
    <property type="entry name" value="Ribosomal_bL36"/>
    <property type="match status" value="1"/>
</dbReference>
<dbReference type="InterPro" id="IPR000473">
    <property type="entry name" value="Ribosomal_bL36"/>
</dbReference>
<dbReference type="InterPro" id="IPR035977">
    <property type="entry name" value="Ribosomal_bL36_sp"/>
</dbReference>
<dbReference type="NCBIfam" id="TIGR01022">
    <property type="entry name" value="rpmJ_bact"/>
    <property type="match status" value="1"/>
</dbReference>
<dbReference type="PANTHER" id="PTHR42888">
    <property type="entry name" value="50S RIBOSOMAL PROTEIN L36, CHLOROPLASTIC"/>
    <property type="match status" value="1"/>
</dbReference>
<dbReference type="PANTHER" id="PTHR42888:SF1">
    <property type="entry name" value="LARGE RIBOSOMAL SUBUNIT PROTEIN BL36C"/>
    <property type="match status" value="1"/>
</dbReference>
<dbReference type="Pfam" id="PF00444">
    <property type="entry name" value="Ribosomal_L36"/>
    <property type="match status" value="1"/>
</dbReference>
<dbReference type="SUPFAM" id="SSF57840">
    <property type="entry name" value="Ribosomal protein L36"/>
    <property type="match status" value="1"/>
</dbReference>
<dbReference type="PROSITE" id="PS00828">
    <property type="entry name" value="RIBOSOMAL_L36"/>
    <property type="match status" value="1"/>
</dbReference>
<accession>Q110C8</accession>
<feature type="chain" id="PRO_0000302328" description="Large ribosomal subunit protein bL36">
    <location>
        <begin position="1"/>
        <end position="37"/>
    </location>
</feature>
<comment type="similarity">
    <text evidence="1">Belongs to the bacterial ribosomal protein bL36 family.</text>
</comment>
<reference key="1">
    <citation type="journal article" date="2015" name="Proc. Natl. Acad. Sci. U.S.A.">
        <title>Trichodesmium genome maintains abundant, widespread noncoding DNA in situ, despite oligotrophic lifestyle.</title>
        <authorList>
            <person name="Walworth N."/>
            <person name="Pfreundt U."/>
            <person name="Nelson W.C."/>
            <person name="Mincer T."/>
            <person name="Heidelberg J.F."/>
            <person name="Fu F."/>
            <person name="Waterbury J.B."/>
            <person name="Glavina del Rio T."/>
            <person name="Goodwin L."/>
            <person name="Kyrpides N.C."/>
            <person name="Land M.L."/>
            <person name="Woyke T."/>
            <person name="Hutchins D.A."/>
            <person name="Hess W.R."/>
            <person name="Webb E.A."/>
        </authorList>
    </citation>
    <scope>NUCLEOTIDE SEQUENCE [LARGE SCALE GENOMIC DNA]</scope>
    <source>
        <strain>IMS101</strain>
    </source>
</reference>
<evidence type="ECO:0000255" key="1">
    <source>
        <dbReference type="HAMAP-Rule" id="MF_00251"/>
    </source>
</evidence>
<evidence type="ECO:0000305" key="2"/>
<sequence length="37" mass="4392">MKVRASVKKICEKCRVIRRRGRVMVICVNPKHKQRQG</sequence>
<name>RL36_TRIEI</name>
<organism>
    <name type="scientific">Trichodesmium erythraeum (strain IMS101)</name>
    <dbReference type="NCBI Taxonomy" id="203124"/>
    <lineage>
        <taxon>Bacteria</taxon>
        <taxon>Bacillati</taxon>
        <taxon>Cyanobacteriota</taxon>
        <taxon>Cyanophyceae</taxon>
        <taxon>Oscillatoriophycideae</taxon>
        <taxon>Oscillatoriales</taxon>
        <taxon>Microcoleaceae</taxon>
        <taxon>Trichodesmium</taxon>
    </lineage>
</organism>
<protein>
    <recommendedName>
        <fullName evidence="1">Large ribosomal subunit protein bL36</fullName>
    </recommendedName>
    <alternativeName>
        <fullName evidence="2">50S ribosomal protein L36</fullName>
    </alternativeName>
</protein>
<keyword id="KW-0687">Ribonucleoprotein</keyword>
<keyword id="KW-0689">Ribosomal protein</keyword>
<proteinExistence type="inferred from homology"/>
<gene>
    <name evidence="1" type="primary">rpmJ</name>
    <name type="ordered locus">Tery_2991</name>
</gene>